<keyword id="KW-0687">Ribonucleoprotein</keyword>
<keyword id="KW-0689">Ribosomal protein</keyword>
<keyword id="KW-0694">RNA-binding</keyword>
<keyword id="KW-0699">rRNA-binding</keyword>
<proteinExistence type="inferred from homology"/>
<accession>A0QKZ3</accession>
<dbReference type="EMBL" id="CP000479">
    <property type="protein sequence ID" value="ABK66019.1"/>
    <property type="molecule type" value="Genomic_DNA"/>
</dbReference>
<dbReference type="RefSeq" id="WP_003873493.1">
    <property type="nucleotide sequence ID" value="NC_008595.1"/>
</dbReference>
<dbReference type="SMR" id="A0QKZ3"/>
<dbReference type="GeneID" id="75271960"/>
<dbReference type="KEGG" id="mav:MAV_4446"/>
<dbReference type="HOGENOM" id="CLU_055188_4_1_11"/>
<dbReference type="Proteomes" id="UP000001574">
    <property type="component" value="Chromosome"/>
</dbReference>
<dbReference type="GO" id="GO:0022625">
    <property type="term" value="C:cytosolic large ribosomal subunit"/>
    <property type="evidence" value="ECO:0007669"/>
    <property type="project" value="TreeGrafter"/>
</dbReference>
<dbReference type="GO" id="GO:0019843">
    <property type="term" value="F:rRNA binding"/>
    <property type="evidence" value="ECO:0007669"/>
    <property type="project" value="UniProtKB-UniRule"/>
</dbReference>
<dbReference type="GO" id="GO:0003735">
    <property type="term" value="F:structural constituent of ribosome"/>
    <property type="evidence" value="ECO:0007669"/>
    <property type="project" value="InterPro"/>
</dbReference>
<dbReference type="GO" id="GO:0006412">
    <property type="term" value="P:translation"/>
    <property type="evidence" value="ECO:0007669"/>
    <property type="project" value="UniProtKB-UniRule"/>
</dbReference>
<dbReference type="FunFam" id="3.100.10.10:FF:000005">
    <property type="entry name" value="50S ribosomal protein L15"/>
    <property type="match status" value="1"/>
</dbReference>
<dbReference type="Gene3D" id="3.100.10.10">
    <property type="match status" value="1"/>
</dbReference>
<dbReference type="HAMAP" id="MF_01341">
    <property type="entry name" value="Ribosomal_uL15"/>
    <property type="match status" value="1"/>
</dbReference>
<dbReference type="InterPro" id="IPR030878">
    <property type="entry name" value="Ribosomal_uL15"/>
</dbReference>
<dbReference type="InterPro" id="IPR021131">
    <property type="entry name" value="Ribosomal_uL15/eL18"/>
</dbReference>
<dbReference type="InterPro" id="IPR036227">
    <property type="entry name" value="Ribosomal_uL15/eL18_sf"/>
</dbReference>
<dbReference type="InterPro" id="IPR005749">
    <property type="entry name" value="Ribosomal_uL15_bac-type"/>
</dbReference>
<dbReference type="InterPro" id="IPR001196">
    <property type="entry name" value="Ribosomal_uL15_CS"/>
</dbReference>
<dbReference type="NCBIfam" id="TIGR01071">
    <property type="entry name" value="rplO_bact"/>
    <property type="match status" value="1"/>
</dbReference>
<dbReference type="PANTHER" id="PTHR12934">
    <property type="entry name" value="50S RIBOSOMAL PROTEIN L15"/>
    <property type="match status" value="1"/>
</dbReference>
<dbReference type="PANTHER" id="PTHR12934:SF11">
    <property type="entry name" value="LARGE RIBOSOMAL SUBUNIT PROTEIN UL15M"/>
    <property type="match status" value="1"/>
</dbReference>
<dbReference type="Pfam" id="PF00828">
    <property type="entry name" value="Ribosomal_L27A"/>
    <property type="match status" value="1"/>
</dbReference>
<dbReference type="SUPFAM" id="SSF52080">
    <property type="entry name" value="Ribosomal proteins L15p and L18e"/>
    <property type="match status" value="1"/>
</dbReference>
<dbReference type="PROSITE" id="PS00475">
    <property type="entry name" value="RIBOSOMAL_L15"/>
    <property type="match status" value="1"/>
</dbReference>
<sequence length="146" mass="15693">MTIKLHDLKPARGSKTPRTRVGRGEGSKGKTAGRGTKGTKARKNVPVTFEGGQMPIHMRLPKLKGFRNRFRTEYEIVNVGDINRLFPQGGSVGVDELVAKGAVRRNSLVKVLGDGKLTVKVEVSAHKFSGSAREKITAAGGSVTEL</sequence>
<protein>
    <recommendedName>
        <fullName evidence="1">Large ribosomal subunit protein uL15</fullName>
    </recommendedName>
    <alternativeName>
        <fullName evidence="3">50S ribosomal protein L15</fullName>
    </alternativeName>
</protein>
<reference key="1">
    <citation type="submission" date="2006-10" db="EMBL/GenBank/DDBJ databases">
        <authorList>
            <person name="Fleischmann R.D."/>
            <person name="Dodson R.J."/>
            <person name="Haft D.H."/>
            <person name="Merkel J.S."/>
            <person name="Nelson W.C."/>
            <person name="Fraser C.M."/>
        </authorList>
    </citation>
    <scope>NUCLEOTIDE SEQUENCE [LARGE SCALE GENOMIC DNA]</scope>
    <source>
        <strain>104</strain>
    </source>
</reference>
<evidence type="ECO:0000255" key="1">
    <source>
        <dbReference type="HAMAP-Rule" id="MF_01341"/>
    </source>
</evidence>
<evidence type="ECO:0000256" key="2">
    <source>
        <dbReference type="SAM" id="MobiDB-lite"/>
    </source>
</evidence>
<evidence type="ECO:0000305" key="3"/>
<organism>
    <name type="scientific">Mycobacterium avium (strain 104)</name>
    <dbReference type="NCBI Taxonomy" id="243243"/>
    <lineage>
        <taxon>Bacteria</taxon>
        <taxon>Bacillati</taxon>
        <taxon>Actinomycetota</taxon>
        <taxon>Actinomycetes</taxon>
        <taxon>Mycobacteriales</taxon>
        <taxon>Mycobacteriaceae</taxon>
        <taxon>Mycobacterium</taxon>
        <taxon>Mycobacterium avium complex (MAC)</taxon>
    </lineage>
</organism>
<feature type="chain" id="PRO_1000054496" description="Large ribosomal subunit protein uL15">
    <location>
        <begin position="1"/>
        <end position="146"/>
    </location>
</feature>
<feature type="region of interest" description="Disordered" evidence="2">
    <location>
        <begin position="1"/>
        <end position="52"/>
    </location>
</feature>
<feature type="compositionally biased region" description="Basic and acidic residues" evidence="2">
    <location>
        <begin position="1"/>
        <end position="10"/>
    </location>
</feature>
<name>RL15_MYCA1</name>
<gene>
    <name evidence="1" type="primary">rplO</name>
    <name type="ordered locus">MAV_4446</name>
</gene>
<comment type="function">
    <text evidence="1">Binds to the 23S rRNA.</text>
</comment>
<comment type="subunit">
    <text evidence="1">Part of the 50S ribosomal subunit.</text>
</comment>
<comment type="similarity">
    <text evidence="1">Belongs to the universal ribosomal protein uL15 family.</text>
</comment>